<gene>
    <name type="ordered locus">At1g18010</name>
    <name type="ORF">T10F20.2</name>
</gene>
<keyword id="KW-0472">Membrane</keyword>
<keyword id="KW-1185">Reference proteome</keyword>
<keyword id="KW-0812">Transmembrane</keyword>
<keyword id="KW-1133">Transmembrane helix</keyword>
<proteinExistence type="evidence at transcript level"/>
<sequence length="459" mass="49970">MNVRDEGKTTAEKHGGGEENKSPENKWRFNSPLAQVSLMGFVCFCCPGMFNALSGMGGGGQVDPTAANNANTAVYTAFTVFGLLGGGFYNVLGPRLTLAAGCSTYVLYAGSFLYYNHHHHQAFAIVAGALLGCGAGLLWAGEGAVMTSYPPPHRKGTYIALFWSIFNLGGVIGGLIPFILNYQRSSAASVNDSTYIAFMCFMFAGVLLSFGILPATSVIRNDGSRCSAVKYSRPSTEAAAVLRLFLDRKMLLIVPAAWASNFFYSYQFNNVNGLLFNLRTRGFNNVFYWGAQMAGSIAIGYVMDFSFKSRRARGFTGISLVAVIGTIIWAGGLANQHGYSLDKLPEKKLDFKDSGIEFAGPFVLYMSYGLLDAMYQSMVYWLIGALADDSQTLSRYSGFYKGVQSAGAAVAWQVDTRKVPLMSQLIVNWSLTTVSYPLLVLLVYFYVKNDNDDDSNDKV</sequence>
<protein>
    <recommendedName>
        <fullName>UNC93-like protein 2</fullName>
    </recommendedName>
</protein>
<evidence type="ECO:0000255" key="1"/>
<evidence type="ECO:0000256" key="2">
    <source>
        <dbReference type="SAM" id="MobiDB-lite"/>
    </source>
</evidence>
<evidence type="ECO:0000305" key="3"/>
<dbReference type="EMBL" id="AC034107">
    <property type="protein sequence ID" value="AAF97819.1"/>
    <property type="molecule type" value="Genomic_DNA"/>
</dbReference>
<dbReference type="EMBL" id="CP002684">
    <property type="protein sequence ID" value="AEE29663.1"/>
    <property type="molecule type" value="Genomic_DNA"/>
</dbReference>
<dbReference type="EMBL" id="BT015081">
    <property type="protein sequence ID" value="AAT71953.1"/>
    <property type="molecule type" value="mRNA"/>
</dbReference>
<dbReference type="EMBL" id="AK176357">
    <property type="protein sequence ID" value="BAD44120.1"/>
    <property type="molecule type" value="mRNA"/>
</dbReference>
<dbReference type="EMBL" id="AY084456">
    <property type="protein sequence ID" value="AAM61028.1"/>
    <property type="molecule type" value="mRNA"/>
</dbReference>
<dbReference type="PIR" id="D86315">
    <property type="entry name" value="D86315"/>
</dbReference>
<dbReference type="RefSeq" id="NP_564043.1">
    <property type="nucleotide sequence ID" value="NM_101662.3"/>
</dbReference>
<dbReference type="RefSeq" id="NP_564044.1">
    <property type="nucleotide sequence ID" value="NM_101663.2"/>
</dbReference>
<dbReference type="SMR" id="Q8LG53"/>
<dbReference type="STRING" id="3702.Q8LG53"/>
<dbReference type="EnsemblPlants" id="AT1G18000.1">
    <property type="protein sequence ID" value="AT1G18000.1"/>
    <property type="gene ID" value="AT1G18000"/>
</dbReference>
<dbReference type="EnsemblPlants" id="AT1G18010.1">
    <property type="protein sequence ID" value="AT1G18010.1"/>
    <property type="gene ID" value="AT1G18010"/>
</dbReference>
<dbReference type="GeneID" id="838381"/>
<dbReference type="Gramene" id="AT1G18000.1">
    <property type="protein sequence ID" value="AT1G18000.1"/>
    <property type="gene ID" value="AT1G18000"/>
</dbReference>
<dbReference type="Gramene" id="AT1G18010.1">
    <property type="protein sequence ID" value="AT1G18010.1"/>
    <property type="gene ID" value="AT1G18010"/>
</dbReference>
<dbReference type="KEGG" id="ath:AT1G18000"/>
<dbReference type="KEGG" id="ath:AT1G18010"/>
<dbReference type="Araport" id="AT1G18010"/>
<dbReference type="TAIR" id="AT1G18010"/>
<dbReference type="HOGENOM" id="CLU_030884_1_2_1"/>
<dbReference type="InParanoid" id="Q8LG53"/>
<dbReference type="OMA" id="AYWFMGA"/>
<dbReference type="OrthoDB" id="196103at2759"/>
<dbReference type="PhylomeDB" id="Q8LG53"/>
<dbReference type="PRO" id="PR:Q8LG53"/>
<dbReference type="Proteomes" id="UP000006548">
    <property type="component" value="Chromosome 1"/>
</dbReference>
<dbReference type="ExpressionAtlas" id="Q8LG53">
    <property type="expression patterns" value="baseline"/>
</dbReference>
<dbReference type="GO" id="GO:0016020">
    <property type="term" value="C:membrane"/>
    <property type="evidence" value="ECO:0007669"/>
    <property type="project" value="UniProtKB-SubCell"/>
</dbReference>
<dbReference type="CDD" id="cd06178">
    <property type="entry name" value="MFS_unc93-like"/>
    <property type="match status" value="1"/>
</dbReference>
<dbReference type="Gene3D" id="1.20.1250.20">
    <property type="entry name" value="MFS general substrate transporter like domains"/>
    <property type="match status" value="1"/>
</dbReference>
<dbReference type="InterPro" id="IPR010291">
    <property type="entry name" value="Ion_channel_UNC-93"/>
</dbReference>
<dbReference type="InterPro" id="IPR036259">
    <property type="entry name" value="MFS_trans_sf"/>
</dbReference>
<dbReference type="InterPro" id="IPR051617">
    <property type="entry name" value="UNC-93-like_regulator"/>
</dbReference>
<dbReference type="PANTHER" id="PTHR23294">
    <property type="entry name" value="ET TRANSLATION PRODUCT-RELATED"/>
    <property type="match status" value="1"/>
</dbReference>
<dbReference type="PANTHER" id="PTHR23294:SF59">
    <property type="entry name" value="UNC93-LIKE PROTEIN C922.05C"/>
    <property type="match status" value="1"/>
</dbReference>
<dbReference type="Pfam" id="PF05978">
    <property type="entry name" value="UNC-93"/>
    <property type="match status" value="1"/>
</dbReference>
<dbReference type="SUPFAM" id="SSF103473">
    <property type="entry name" value="MFS general substrate transporter"/>
    <property type="match status" value="1"/>
</dbReference>
<feature type="chain" id="PRO_0000416686" description="UNC93-like protein 2">
    <location>
        <begin position="1"/>
        <end position="459"/>
    </location>
</feature>
<feature type="transmembrane region" description="Helical" evidence="1">
    <location>
        <begin position="38"/>
        <end position="58"/>
    </location>
</feature>
<feature type="transmembrane region" description="Helical" evidence="1">
    <location>
        <begin position="73"/>
        <end position="93"/>
    </location>
</feature>
<feature type="transmembrane region" description="Helical" evidence="1">
    <location>
        <begin position="96"/>
        <end position="116"/>
    </location>
</feature>
<feature type="transmembrane region" description="Helical" evidence="1">
    <location>
        <begin position="122"/>
        <end position="142"/>
    </location>
</feature>
<feature type="transmembrane region" description="Helical" evidence="1">
    <location>
        <begin position="159"/>
        <end position="179"/>
    </location>
</feature>
<feature type="transmembrane region" description="Helical" evidence="1">
    <location>
        <begin position="195"/>
        <end position="215"/>
    </location>
</feature>
<feature type="transmembrane region" description="Helical" evidence="1">
    <location>
        <begin position="251"/>
        <end position="271"/>
    </location>
</feature>
<feature type="transmembrane region" description="Helical" evidence="1">
    <location>
        <begin position="287"/>
        <end position="307"/>
    </location>
</feature>
<feature type="transmembrane region" description="Helical" evidence="1">
    <location>
        <begin position="314"/>
        <end position="334"/>
    </location>
</feature>
<feature type="transmembrane region" description="Helical" evidence="1">
    <location>
        <begin position="355"/>
        <end position="375"/>
    </location>
</feature>
<feature type="transmembrane region" description="Helical" evidence="1">
    <location>
        <begin position="425"/>
        <end position="445"/>
    </location>
</feature>
<feature type="region of interest" description="Disordered" evidence="2">
    <location>
        <begin position="1"/>
        <end position="26"/>
    </location>
</feature>
<accession>Q8LG53</accession>
<accession>Q9LDH5</accession>
<name>UN932_ARATH</name>
<organism>
    <name type="scientific">Arabidopsis thaliana</name>
    <name type="common">Mouse-ear cress</name>
    <dbReference type="NCBI Taxonomy" id="3702"/>
    <lineage>
        <taxon>Eukaryota</taxon>
        <taxon>Viridiplantae</taxon>
        <taxon>Streptophyta</taxon>
        <taxon>Embryophyta</taxon>
        <taxon>Tracheophyta</taxon>
        <taxon>Spermatophyta</taxon>
        <taxon>Magnoliopsida</taxon>
        <taxon>eudicotyledons</taxon>
        <taxon>Gunneridae</taxon>
        <taxon>Pentapetalae</taxon>
        <taxon>rosids</taxon>
        <taxon>malvids</taxon>
        <taxon>Brassicales</taxon>
        <taxon>Brassicaceae</taxon>
        <taxon>Camelineae</taxon>
        <taxon>Arabidopsis</taxon>
    </lineage>
</organism>
<comment type="subcellular location">
    <subcellularLocation>
        <location evidence="3">Membrane</location>
        <topology evidence="3">Multi-pass membrane protein</topology>
    </subcellularLocation>
</comment>
<comment type="similarity">
    <text evidence="3">Belongs to the unc-93 family.</text>
</comment>
<reference key="1">
    <citation type="journal article" date="2000" name="Nature">
        <title>Sequence and analysis of chromosome 1 of the plant Arabidopsis thaliana.</title>
        <authorList>
            <person name="Theologis A."/>
            <person name="Ecker J.R."/>
            <person name="Palm C.J."/>
            <person name="Federspiel N.A."/>
            <person name="Kaul S."/>
            <person name="White O."/>
            <person name="Alonso J."/>
            <person name="Altafi H."/>
            <person name="Araujo R."/>
            <person name="Bowman C.L."/>
            <person name="Brooks S.Y."/>
            <person name="Buehler E."/>
            <person name="Chan A."/>
            <person name="Chao Q."/>
            <person name="Chen H."/>
            <person name="Cheuk R.F."/>
            <person name="Chin C.W."/>
            <person name="Chung M.K."/>
            <person name="Conn L."/>
            <person name="Conway A.B."/>
            <person name="Conway A.R."/>
            <person name="Creasy T.H."/>
            <person name="Dewar K."/>
            <person name="Dunn P."/>
            <person name="Etgu P."/>
            <person name="Feldblyum T.V."/>
            <person name="Feng J.-D."/>
            <person name="Fong B."/>
            <person name="Fujii C.Y."/>
            <person name="Gill J.E."/>
            <person name="Goldsmith A.D."/>
            <person name="Haas B."/>
            <person name="Hansen N.F."/>
            <person name="Hughes B."/>
            <person name="Huizar L."/>
            <person name="Hunter J.L."/>
            <person name="Jenkins J."/>
            <person name="Johnson-Hopson C."/>
            <person name="Khan S."/>
            <person name="Khaykin E."/>
            <person name="Kim C.J."/>
            <person name="Koo H.L."/>
            <person name="Kremenetskaia I."/>
            <person name="Kurtz D.B."/>
            <person name="Kwan A."/>
            <person name="Lam B."/>
            <person name="Langin-Hooper S."/>
            <person name="Lee A."/>
            <person name="Lee J.M."/>
            <person name="Lenz C.A."/>
            <person name="Li J.H."/>
            <person name="Li Y.-P."/>
            <person name="Lin X."/>
            <person name="Liu S.X."/>
            <person name="Liu Z.A."/>
            <person name="Luros J.S."/>
            <person name="Maiti R."/>
            <person name="Marziali A."/>
            <person name="Militscher J."/>
            <person name="Miranda M."/>
            <person name="Nguyen M."/>
            <person name="Nierman W.C."/>
            <person name="Osborne B.I."/>
            <person name="Pai G."/>
            <person name="Peterson J."/>
            <person name="Pham P.K."/>
            <person name="Rizzo M."/>
            <person name="Rooney T."/>
            <person name="Rowley D."/>
            <person name="Sakano H."/>
            <person name="Salzberg S.L."/>
            <person name="Schwartz J.R."/>
            <person name="Shinn P."/>
            <person name="Southwick A.M."/>
            <person name="Sun H."/>
            <person name="Tallon L.J."/>
            <person name="Tambunga G."/>
            <person name="Toriumi M.J."/>
            <person name="Town C.D."/>
            <person name="Utterback T."/>
            <person name="Van Aken S."/>
            <person name="Vaysberg M."/>
            <person name="Vysotskaia V.S."/>
            <person name="Walker M."/>
            <person name="Wu D."/>
            <person name="Yu G."/>
            <person name="Fraser C.M."/>
            <person name="Venter J.C."/>
            <person name="Davis R.W."/>
        </authorList>
    </citation>
    <scope>NUCLEOTIDE SEQUENCE [LARGE SCALE GENOMIC DNA]</scope>
    <source>
        <strain>cv. Columbia</strain>
    </source>
</reference>
<reference key="2">
    <citation type="journal article" date="2017" name="Plant J.">
        <title>Araport11: a complete reannotation of the Arabidopsis thaliana reference genome.</title>
        <authorList>
            <person name="Cheng C.Y."/>
            <person name="Krishnakumar V."/>
            <person name="Chan A.P."/>
            <person name="Thibaud-Nissen F."/>
            <person name="Schobel S."/>
            <person name="Town C.D."/>
        </authorList>
    </citation>
    <scope>GENOME REANNOTATION</scope>
    <source>
        <strain>cv. Columbia</strain>
    </source>
</reference>
<reference key="3">
    <citation type="journal article" date="2003" name="Science">
        <title>Empirical analysis of transcriptional activity in the Arabidopsis genome.</title>
        <authorList>
            <person name="Yamada K."/>
            <person name="Lim J."/>
            <person name="Dale J.M."/>
            <person name="Chen H."/>
            <person name="Shinn P."/>
            <person name="Palm C.J."/>
            <person name="Southwick A.M."/>
            <person name="Wu H.C."/>
            <person name="Kim C.J."/>
            <person name="Nguyen M."/>
            <person name="Pham P.K."/>
            <person name="Cheuk R.F."/>
            <person name="Karlin-Newmann G."/>
            <person name="Liu S.X."/>
            <person name="Lam B."/>
            <person name="Sakano H."/>
            <person name="Wu T."/>
            <person name="Yu G."/>
            <person name="Miranda M."/>
            <person name="Quach H.L."/>
            <person name="Tripp M."/>
            <person name="Chang C.H."/>
            <person name="Lee J.M."/>
            <person name="Toriumi M.J."/>
            <person name="Chan M.M."/>
            <person name="Tang C.C."/>
            <person name="Onodera C.S."/>
            <person name="Deng J.M."/>
            <person name="Akiyama K."/>
            <person name="Ansari Y."/>
            <person name="Arakawa T."/>
            <person name="Banh J."/>
            <person name="Banno F."/>
            <person name="Bowser L."/>
            <person name="Brooks S.Y."/>
            <person name="Carninci P."/>
            <person name="Chao Q."/>
            <person name="Choy N."/>
            <person name="Enju A."/>
            <person name="Goldsmith A.D."/>
            <person name="Gurjal M."/>
            <person name="Hansen N.F."/>
            <person name="Hayashizaki Y."/>
            <person name="Johnson-Hopson C."/>
            <person name="Hsuan V.W."/>
            <person name="Iida K."/>
            <person name="Karnes M."/>
            <person name="Khan S."/>
            <person name="Koesema E."/>
            <person name="Ishida J."/>
            <person name="Jiang P.X."/>
            <person name="Jones T."/>
            <person name="Kawai J."/>
            <person name="Kamiya A."/>
            <person name="Meyers C."/>
            <person name="Nakajima M."/>
            <person name="Narusaka M."/>
            <person name="Seki M."/>
            <person name="Sakurai T."/>
            <person name="Satou M."/>
            <person name="Tamse R."/>
            <person name="Vaysberg M."/>
            <person name="Wallender E.K."/>
            <person name="Wong C."/>
            <person name="Yamamura Y."/>
            <person name="Yuan S."/>
            <person name="Shinozaki K."/>
            <person name="Davis R.W."/>
            <person name="Theologis A."/>
            <person name="Ecker J.R."/>
        </authorList>
    </citation>
    <scope>NUCLEOTIDE SEQUENCE [LARGE SCALE MRNA]</scope>
    <source>
        <strain>cv. Columbia</strain>
    </source>
</reference>
<reference key="4">
    <citation type="submission" date="2004-07" db="EMBL/GenBank/DDBJ databases">
        <title>Arabidopsis ORF clones.</title>
        <authorList>
            <person name="Cheuk R.F."/>
            <person name="Chen H."/>
            <person name="Kim C.J."/>
            <person name="Shinn P."/>
            <person name="Ecker J.R."/>
        </authorList>
    </citation>
    <scope>NUCLEOTIDE SEQUENCE [LARGE SCALE MRNA]</scope>
    <source>
        <strain>cv. Columbia</strain>
    </source>
</reference>
<reference key="5">
    <citation type="submission" date="2004-09" db="EMBL/GenBank/DDBJ databases">
        <title>Large-scale analysis of RIKEN Arabidopsis full-length (RAFL) cDNAs.</title>
        <authorList>
            <person name="Totoki Y."/>
            <person name="Seki M."/>
            <person name="Ishida J."/>
            <person name="Nakajima M."/>
            <person name="Enju A."/>
            <person name="Kamiya A."/>
            <person name="Narusaka M."/>
            <person name="Shin-i T."/>
            <person name="Nakagawa M."/>
            <person name="Sakamoto N."/>
            <person name="Oishi K."/>
            <person name="Kohara Y."/>
            <person name="Kobayashi M."/>
            <person name="Toyoda A."/>
            <person name="Sakaki Y."/>
            <person name="Sakurai T."/>
            <person name="Iida K."/>
            <person name="Akiyama K."/>
            <person name="Satou M."/>
            <person name="Toyoda T."/>
            <person name="Konagaya A."/>
            <person name="Carninci P."/>
            <person name="Kawai J."/>
            <person name="Hayashizaki Y."/>
            <person name="Shinozaki K."/>
        </authorList>
    </citation>
    <scope>NUCLEOTIDE SEQUENCE [LARGE SCALE MRNA]</scope>
    <source>
        <strain>cv. Columbia</strain>
    </source>
</reference>
<reference key="6">
    <citation type="submission" date="2002-03" db="EMBL/GenBank/DDBJ databases">
        <title>Full-length cDNA from Arabidopsis thaliana.</title>
        <authorList>
            <person name="Brover V.V."/>
            <person name="Troukhan M.E."/>
            <person name="Alexandrov N.A."/>
            <person name="Lu Y.-P."/>
            <person name="Flavell R.B."/>
            <person name="Feldmann K.A."/>
        </authorList>
    </citation>
    <scope>NUCLEOTIDE SEQUENCE [LARGE SCALE MRNA]</scope>
</reference>